<reference key="1">
    <citation type="journal article" date="1993" name="Mol. Cell. Biol.">
        <title>TSF3, a global regulatory protein that silences transcription of yeast GAL genes, also mediates repression by alpha 2 repressor and is identical to SIN4.</title>
        <authorList>
            <person name="Chen S."/>
            <person name="West R.W. Jr."/>
            <person name="Johnson S.L."/>
            <person name="Gans H."/>
            <person name="Kruger B."/>
            <person name="Ma J."/>
        </authorList>
    </citation>
    <scope>NUCLEOTIDE SEQUENCE [GENOMIC DNA]</scope>
    <source>
        <strain>YM256</strain>
    </source>
</reference>
<reference key="2">
    <citation type="journal article" date="1992" name="Mol. Cell. Biol.">
        <title>Involvement of the SIN4 global transcriptional regulator in the chromatin structure of Saccharomyces cerevisiae.</title>
        <authorList>
            <person name="Jiang Y.W."/>
            <person name="Stillman D.J."/>
        </authorList>
    </citation>
    <scope>NUCLEOTIDE SEQUENCE [GENOMIC DNA]</scope>
</reference>
<reference key="3">
    <citation type="submission" date="1992-08" db="EMBL/GenBank/DDBJ databases">
        <title>BEL2/SIN4/TSF3 encodes a position-dependent general repressor of a diverse set of genes in yeast.</title>
        <authorList>
            <person name="Harashima S."/>
            <person name="Mabuchi H."/>
            <person name="Ramash R."/>
            <person name="Hasebe M."/>
            <person name="Tanaka A."/>
            <person name="Oshima Y."/>
        </authorList>
    </citation>
    <scope>NUCLEOTIDE SEQUENCE [GENOMIC DNA]</scope>
</reference>
<reference key="4">
    <citation type="journal article" date="1996" name="Yeast">
        <title>The DNA sequence of cosmid 14-5 from chromosome XIV reveals 21 open reading frames including a novel gene encoding a globin-like domain.</title>
        <authorList>
            <person name="Pandolfo D."/>
            <person name="de Antoni A."/>
            <person name="Lanfranchi G."/>
            <person name="Valle G."/>
        </authorList>
    </citation>
    <scope>NUCLEOTIDE SEQUENCE [GENOMIC DNA]</scope>
</reference>
<reference key="5">
    <citation type="journal article" date="1997" name="Nature">
        <title>The nucleotide sequence of Saccharomyces cerevisiae chromosome XIV and its evolutionary implications.</title>
        <authorList>
            <person name="Philippsen P."/>
            <person name="Kleine K."/>
            <person name="Poehlmann R."/>
            <person name="Duesterhoeft A."/>
            <person name="Hamberg K."/>
            <person name="Hegemann J.H."/>
            <person name="Obermaier B."/>
            <person name="Urrestarazu L.A."/>
            <person name="Aert R."/>
            <person name="Albermann K."/>
            <person name="Altmann R."/>
            <person name="Andre B."/>
            <person name="Baladron V."/>
            <person name="Ballesta J.P.G."/>
            <person name="Becam A.-M."/>
            <person name="Beinhauer J.D."/>
            <person name="Boskovic J."/>
            <person name="Buitrago M.J."/>
            <person name="Bussereau F."/>
            <person name="Coster F."/>
            <person name="Crouzet M."/>
            <person name="D'Angelo M."/>
            <person name="Dal Pero F."/>
            <person name="De Antoni A."/>
            <person name="del Rey F."/>
            <person name="Doignon F."/>
            <person name="Domdey H."/>
            <person name="Dubois E."/>
            <person name="Fiedler T.A."/>
            <person name="Fleig U."/>
            <person name="Floeth M."/>
            <person name="Fritz C."/>
            <person name="Gaillardin C."/>
            <person name="Garcia-Cantalejo J.M."/>
            <person name="Glansdorff N."/>
            <person name="Goffeau A."/>
            <person name="Gueldener U."/>
            <person name="Herbert C.J."/>
            <person name="Heumann K."/>
            <person name="Heuss-Neitzel D."/>
            <person name="Hilbert H."/>
            <person name="Hinni K."/>
            <person name="Iraqui Houssaini I."/>
            <person name="Jacquet M."/>
            <person name="Jimenez A."/>
            <person name="Jonniaux J.-L."/>
            <person name="Karpfinger-Hartl L."/>
            <person name="Lanfranchi G."/>
            <person name="Lepingle A."/>
            <person name="Levesque H."/>
            <person name="Lyck R."/>
            <person name="Maftahi M."/>
            <person name="Mallet L."/>
            <person name="Maurer C.T.C."/>
            <person name="Messenguy F."/>
            <person name="Mewes H.-W."/>
            <person name="Moestl D."/>
            <person name="Nasr F."/>
            <person name="Nicaud J.-M."/>
            <person name="Niedenthal R.K."/>
            <person name="Pandolfo D."/>
            <person name="Pierard A."/>
            <person name="Piravandi E."/>
            <person name="Planta R.J."/>
            <person name="Pohl T.M."/>
            <person name="Purnelle B."/>
            <person name="Rebischung C."/>
            <person name="Remacha M.A."/>
            <person name="Revuelta J.L."/>
            <person name="Rinke M."/>
            <person name="Saiz J.E."/>
            <person name="Sartorello F."/>
            <person name="Scherens B."/>
            <person name="Sen-Gupta M."/>
            <person name="Soler-Mira A."/>
            <person name="Urbanus J.H.M."/>
            <person name="Valle G."/>
            <person name="Van Dyck L."/>
            <person name="Verhasselt P."/>
            <person name="Vierendeels F."/>
            <person name="Vissers S."/>
            <person name="Voet M."/>
            <person name="Volckaert G."/>
            <person name="Wach A."/>
            <person name="Wambutt R."/>
            <person name="Wedler H."/>
            <person name="Zollner A."/>
            <person name="Hani J."/>
        </authorList>
    </citation>
    <scope>NUCLEOTIDE SEQUENCE [LARGE SCALE GENOMIC DNA]</scope>
    <source>
        <strain>ATCC 204508 / S288c</strain>
    </source>
</reference>
<reference key="6">
    <citation type="journal article" date="2014" name="G3 (Bethesda)">
        <title>The reference genome sequence of Saccharomyces cerevisiae: Then and now.</title>
        <authorList>
            <person name="Engel S.R."/>
            <person name="Dietrich F.S."/>
            <person name="Fisk D.G."/>
            <person name="Binkley G."/>
            <person name="Balakrishnan R."/>
            <person name="Costanzo M.C."/>
            <person name="Dwight S.S."/>
            <person name="Hitz B.C."/>
            <person name="Karra K."/>
            <person name="Nash R.S."/>
            <person name="Weng S."/>
            <person name="Wong E.D."/>
            <person name="Lloyd P."/>
            <person name="Skrzypek M.S."/>
            <person name="Miyasato S.R."/>
            <person name="Simison M."/>
            <person name="Cherry J.M."/>
        </authorList>
    </citation>
    <scope>GENOME REANNOTATION</scope>
    <source>
        <strain>ATCC 204508 / S288c</strain>
    </source>
</reference>
<reference key="7">
    <citation type="journal article" date="1995" name="Proc. Natl. Acad. Sci. U.S.A.">
        <title>Yeast global transcriptional regulators Sin4 and Rgr1 are components of mediator complex/RNA polymerase II holoenzyme.</title>
        <authorList>
            <person name="Li Y."/>
            <person name="Bjoerklund S."/>
            <person name="Jiang Y.W."/>
            <person name="Kim Y.-J."/>
            <person name="Lane W.S."/>
            <person name="Stillman D.J."/>
            <person name="Kornberg R.D."/>
        </authorList>
    </citation>
    <scope>COMPONENT OF MEDIATOR COMPLEX</scope>
</reference>
<reference key="8">
    <citation type="journal article" date="2003" name="EMBO J.">
        <title>Osmostress-induced transcription by Hot1 depends on a Hog1-mediated recruitment of the RNA Pol II.</title>
        <authorList>
            <person name="Alepuz P.M."/>
            <person name="de Nadal E."/>
            <person name="Zapater M."/>
            <person name="Ammerer G."/>
            <person name="Posas F."/>
        </authorList>
    </citation>
    <scope>INTERACTION WITH HOG1</scope>
</reference>
<reference key="9">
    <citation type="journal article" date="2003" name="Nature">
        <title>Global analysis of protein localization in budding yeast.</title>
        <authorList>
            <person name="Huh W.-K."/>
            <person name="Falvo J.V."/>
            <person name="Gerke L.C."/>
            <person name="Carroll A.S."/>
            <person name="Howson R.W."/>
            <person name="Weissman J.S."/>
            <person name="O'Shea E.K."/>
        </authorList>
    </citation>
    <scope>SUBCELLULAR LOCATION [LARGE SCALE ANALYSIS]</scope>
</reference>
<reference key="10">
    <citation type="journal article" date="2003" name="Nature">
        <title>Global analysis of protein expression in yeast.</title>
        <authorList>
            <person name="Ghaemmaghami S."/>
            <person name="Huh W.-K."/>
            <person name="Bower K."/>
            <person name="Howson R.W."/>
            <person name="Belle A."/>
            <person name="Dephoure N."/>
            <person name="O'Shea E.K."/>
            <person name="Weissman J.S."/>
        </authorList>
    </citation>
    <scope>LEVEL OF PROTEIN EXPRESSION [LARGE SCALE ANALYSIS]</scope>
</reference>
<reference key="11">
    <citation type="journal article" date="2004" name="Mol. Cell">
        <title>A unified nomenclature for protein subunits of mediator complexes linking transcriptional regulators to RNA polymerase II.</title>
        <authorList>
            <person name="Bourbon H.-M."/>
            <person name="Aguilera A."/>
            <person name="Ansari A.Z."/>
            <person name="Asturias F.J."/>
            <person name="Berk A.J."/>
            <person name="Bjoerklund S."/>
            <person name="Blackwell T.K."/>
            <person name="Borggrefe T."/>
            <person name="Carey M."/>
            <person name="Carlson M."/>
            <person name="Conaway J.W."/>
            <person name="Conaway R.C."/>
            <person name="Emmons S.W."/>
            <person name="Fondell J.D."/>
            <person name="Freedman L.P."/>
            <person name="Fukasawa T."/>
            <person name="Gustafsson C.M."/>
            <person name="Han M."/>
            <person name="He X."/>
            <person name="Herman P.K."/>
            <person name="Hinnebusch A.G."/>
            <person name="Holmberg S."/>
            <person name="Holstege F.C.P."/>
            <person name="Jaehning J.A."/>
            <person name="Kim Y.-J."/>
            <person name="Kuras L."/>
            <person name="Leutz A."/>
            <person name="Lis J.T."/>
            <person name="Meisterernest M."/>
            <person name="Naeaer A.M."/>
            <person name="Nasmyth K."/>
            <person name="Parvin J.D."/>
            <person name="Ptashne M."/>
            <person name="Reinberg D."/>
            <person name="Ronne H."/>
            <person name="Sadowski I."/>
            <person name="Sakurai H."/>
            <person name="Sipiczki M."/>
            <person name="Sternberg P.W."/>
            <person name="Stillman D.J."/>
            <person name="Strich R."/>
            <person name="Struhl K."/>
            <person name="Svejstrup J.Q."/>
            <person name="Tuck S."/>
            <person name="Winston F."/>
            <person name="Roeder R.G."/>
            <person name="Kornberg R.D."/>
        </authorList>
    </citation>
    <scope>NOMENCLATURE</scope>
</reference>
<reference key="12">
    <citation type="journal article" date="2004" name="Mol. Cell. Biol.">
        <title>Two cyclin-dependent kinases promote RNA polymerase II transcription and formation of the scaffold complex.</title>
        <authorList>
            <person name="Liu Y."/>
            <person name="Kung C."/>
            <person name="Fishburn J."/>
            <person name="Ansari A.Z."/>
            <person name="Shokat K.M."/>
            <person name="Hahn S."/>
        </authorList>
    </citation>
    <scope>PHOSPHORYLATION BY KIN28</scope>
</reference>
<reference key="13">
    <citation type="journal article" date="2004" name="Nucleic Acids Res.">
        <title>A high resolution protein interaction map of the yeast Mediator complex.</title>
        <authorList>
            <person name="Guglielmi B."/>
            <person name="van Berkum N.L."/>
            <person name="Klapholz B."/>
            <person name="Bijma T."/>
            <person name="Boube M."/>
            <person name="Boschiero C."/>
            <person name="Bourbon H.-M."/>
            <person name="Holstege F.C.P."/>
            <person name="Werner M."/>
        </authorList>
    </citation>
    <scope>STRUCTURE OF THE MEDIATOR COMPLEX</scope>
</reference>
<reference key="14">
    <citation type="journal article" date="2005" name="J. Biol. Chem.">
        <title>Preponderance of free mediator in the yeast Saccharomyces cerevisiae.</title>
        <authorList>
            <person name="Takagi Y."/>
            <person name="Chadick J.Z."/>
            <person name="Davis J.A."/>
            <person name="Asturias F.J."/>
        </authorList>
    </citation>
    <scope>CHARACTERIZATION OF THE MEDIATOR COMPLEX</scope>
</reference>
<reference key="15">
    <citation type="journal article" date="2005" name="J. Biol. Chem.">
        <title>Mediator and TFIIH govern carboxyl-terminal domain-dependent transcription in yeast extracts.</title>
        <authorList>
            <person name="Nair D."/>
            <person name="Kim Y."/>
            <person name="Myers L.C."/>
        </authorList>
    </citation>
    <scope>FUNCTION OF THE MEDIATOR COMPLEX</scope>
</reference>
<reference key="16">
    <citation type="journal article" date="2005" name="Mol. Cell">
        <title>Mediator expression profiling epistasis reveals a signal transduction pathway with antagonistic submodules and highly specific downstream targets.</title>
        <authorList>
            <person name="van de Peppel J."/>
            <person name="Kettelarij N."/>
            <person name="van Bakel H."/>
            <person name="Kockelkorn T.T.J.P."/>
            <person name="van Leenen D."/>
            <person name="Holstege F.C.P."/>
        </authorList>
    </citation>
    <scope>FUNCTION</scope>
</reference>
<reference key="17">
    <citation type="journal article" date="2006" name="J. Biol. Chem.">
        <title>Mediator as a general transcription factor.</title>
        <authorList>
            <person name="Takagi Y."/>
            <person name="Kornberg R.D."/>
        </authorList>
    </citation>
    <scope>FUNCTION OF THE MEDIATOR COMPLEX</scope>
</reference>
<reference key="18">
    <citation type="journal article" date="2007" name="J. Biol. Chem.">
        <title>Med19(Rox3) regulates intermodule interactions in the Saccharomyces cerevisiae mediator complex.</title>
        <authorList>
            <person name="Baidoobonso S.M."/>
            <person name="Guidi B.W."/>
            <person name="Myers L.C."/>
        </authorList>
    </citation>
    <scope>CHARACTERIZATION OF THE MEDIATOR COMPLEX</scope>
    <scope>INTERACTION OF THE MEDIATOR COMPLEX WITH RNA POLYMERASE II</scope>
</reference>
<reference key="19">
    <citation type="journal article" date="2002" name="Mol. Cell">
        <title>Structure of the yeast RNA polymerase II holoenzyme: mediator conformation and polymerase interaction.</title>
        <authorList>
            <person name="Davis J.A."/>
            <person name="Takagi Y."/>
            <person name="Kornberg R.D."/>
            <person name="Asturias F.J."/>
        </authorList>
    </citation>
    <scope>ELECTRON MICROSCOPY OF MEDIATOR COMPLEX IN COMPLEX WITH RNA POLYMERASE II</scope>
</reference>
<accession>P32259</accession>
<accession>D6W0V7</accession>
<evidence type="ECO:0000255" key="1"/>
<evidence type="ECO:0000256" key="2">
    <source>
        <dbReference type="SAM" id="MobiDB-lite"/>
    </source>
</evidence>
<evidence type="ECO:0000269" key="3">
    <source>
    </source>
</evidence>
<evidence type="ECO:0000269" key="4">
    <source>
    </source>
</evidence>
<evidence type="ECO:0000269" key="5">
    <source>
    </source>
</evidence>
<evidence type="ECO:0000269" key="6">
    <source>
    </source>
</evidence>
<evidence type="ECO:0000269" key="7">
    <source>
    </source>
</evidence>
<evidence type="ECO:0000269" key="8">
    <source>
    </source>
</evidence>
<evidence type="ECO:0000269" key="9">
    <source>
    </source>
</evidence>
<evidence type="ECO:0000269" key="10">
    <source>
    </source>
</evidence>
<evidence type="ECO:0000305" key="11"/>
<organism>
    <name type="scientific">Saccharomyces cerevisiae (strain ATCC 204508 / S288c)</name>
    <name type="common">Baker's yeast</name>
    <dbReference type="NCBI Taxonomy" id="559292"/>
    <lineage>
        <taxon>Eukaryota</taxon>
        <taxon>Fungi</taxon>
        <taxon>Dikarya</taxon>
        <taxon>Ascomycota</taxon>
        <taxon>Saccharomycotina</taxon>
        <taxon>Saccharomycetes</taxon>
        <taxon>Saccharomycetales</taxon>
        <taxon>Saccharomycetaceae</taxon>
        <taxon>Saccharomyces</taxon>
    </lineage>
</organism>
<feature type="chain" id="PRO_0000096364" description="Mediator of RNA polymerase II transcription subunit 16">
    <location>
        <begin position="1"/>
        <end position="974"/>
    </location>
</feature>
<feature type="region of interest" description="Disordered" evidence="2">
    <location>
        <begin position="62"/>
        <end position="92"/>
    </location>
</feature>
<feature type="short sequence motif" description="Nuclear localization signal" evidence="1">
    <location>
        <begin position="889"/>
        <end position="893"/>
    </location>
</feature>
<feature type="compositionally biased region" description="Low complexity" evidence="2">
    <location>
        <begin position="63"/>
        <end position="75"/>
    </location>
</feature>
<feature type="compositionally biased region" description="Polar residues" evidence="2">
    <location>
        <begin position="76"/>
        <end position="92"/>
    </location>
</feature>
<dbReference type="EMBL" id="M93050">
    <property type="protein sequence ID" value="AAA35044.1"/>
    <property type="molecule type" value="Genomic_DNA"/>
</dbReference>
<dbReference type="EMBL" id="X64516">
    <property type="protein sequence ID" value="CAA45819.1"/>
    <property type="molecule type" value="Genomic_DNA"/>
</dbReference>
<dbReference type="EMBL" id="D12918">
    <property type="protein sequence ID" value="BAA02302.1"/>
    <property type="molecule type" value="Genomic_DNA"/>
</dbReference>
<dbReference type="EMBL" id="Z69381">
    <property type="protein sequence ID" value="CAA93362.1"/>
    <property type="molecule type" value="Genomic_DNA"/>
</dbReference>
<dbReference type="EMBL" id="Z71512">
    <property type="protein sequence ID" value="CAA96140.1"/>
    <property type="molecule type" value="Genomic_DNA"/>
</dbReference>
<dbReference type="EMBL" id="BK006947">
    <property type="protein sequence ID" value="DAA10323.1"/>
    <property type="molecule type" value="Genomic_DNA"/>
</dbReference>
<dbReference type="PIR" id="A44484">
    <property type="entry name" value="A44484"/>
</dbReference>
<dbReference type="RefSeq" id="NP_014163.1">
    <property type="nucleotide sequence ID" value="NM_001183074.1"/>
</dbReference>
<dbReference type="PDB" id="7UIC">
    <property type="method" value="EM"/>
    <property type="resolution" value="3.70 A"/>
    <property type="chains" value="p=1-974"/>
</dbReference>
<dbReference type="PDB" id="7UIK">
    <property type="method" value="EM"/>
    <property type="resolution" value="7.70 A"/>
    <property type="chains" value="p=1-974"/>
</dbReference>
<dbReference type="PDB" id="7UIL">
    <property type="method" value="EM"/>
    <property type="resolution" value="4.30 A"/>
    <property type="chains" value="6/p=1-974"/>
</dbReference>
<dbReference type="PDB" id="7UIO">
    <property type="method" value="EM"/>
    <property type="resolution" value="3.30 A"/>
    <property type="chains" value="Ap/Bp=1-974"/>
</dbReference>
<dbReference type="PDBsum" id="7UIC"/>
<dbReference type="PDBsum" id="7UIK"/>
<dbReference type="PDBsum" id="7UIL"/>
<dbReference type="PDBsum" id="7UIO"/>
<dbReference type="EMDB" id="EMD-26543"/>
<dbReference type="EMDB" id="EMD-26547"/>
<dbReference type="EMDB" id="EMD-26548"/>
<dbReference type="EMDB" id="EMD-26551"/>
<dbReference type="SMR" id="P32259"/>
<dbReference type="BioGRID" id="35603">
    <property type="interactions" value="606"/>
</dbReference>
<dbReference type="ComplexPortal" id="CPX-3226">
    <property type="entry name" value="Core mediator complex"/>
</dbReference>
<dbReference type="DIP" id="DIP-1617N"/>
<dbReference type="FunCoup" id="P32259">
    <property type="interactions" value="337"/>
</dbReference>
<dbReference type="IntAct" id="P32259">
    <property type="interactions" value="49"/>
</dbReference>
<dbReference type="MINT" id="P32259"/>
<dbReference type="STRING" id="4932.YNL236W"/>
<dbReference type="GlyGen" id="P32259">
    <property type="glycosylation" value="2 sites, 1 O-linked glycan (2 sites)"/>
</dbReference>
<dbReference type="iPTMnet" id="P32259"/>
<dbReference type="PaxDb" id="4932-YNL236W"/>
<dbReference type="PeptideAtlas" id="P32259"/>
<dbReference type="EnsemblFungi" id="YNL236W_mRNA">
    <property type="protein sequence ID" value="YNL236W"/>
    <property type="gene ID" value="YNL236W"/>
</dbReference>
<dbReference type="GeneID" id="855485"/>
<dbReference type="KEGG" id="sce:YNL236W"/>
<dbReference type="AGR" id="SGD:S000005180"/>
<dbReference type="SGD" id="S000005180">
    <property type="gene designation" value="SIN4"/>
</dbReference>
<dbReference type="VEuPathDB" id="FungiDB:YNL236W"/>
<dbReference type="eggNOG" id="ENOG502QWAC">
    <property type="taxonomic scope" value="Eukaryota"/>
</dbReference>
<dbReference type="HOGENOM" id="CLU_311703_0_0_1"/>
<dbReference type="InParanoid" id="P32259"/>
<dbReference type="OMA" id="FDTTWLG"/>
<dbReference type="OrthoDB" id="4139168at2759"/>
<dbReference type="BioCyc" id="YEAST:G3O-33235-MONOMER"/>
<dbReference type="BioGRID-ORCS" id="855485">
    <property type="hits" value="0 hits in 10 CRISPR screens"/>
</dbReference>
<dbReference type="PRO" id="PR:P32259"/>
<dbReference type="Proteomes" id="UP000002311">
    <property type="component" value="Chromosome XIV"/>
</dbReference>
<dbReference type="RNAct" id="P32259">
    <property type="molecule type" value="protein"/>
</dbReference>
<dbReference type="GO" id="GO:0070847">
    <property type="term" value="C:core mediator complex"/>
    <property type="evidence" value="ECO:0000314"/>
    <property type="project" value="SGD"/>
</dbReference>
<dbReference type="GO" id="GO:0016592">
    <property type="term" value="C:mediator complex"/>
    <property type="evidence" value="ECO:0000314"/>
    <property type="project" value="SGD"/>
</dbReference>
<dbReference type="GO" id="GO:0005634">
    <property type="term" value="C:nucleus"/>
    <property type="evidence" value="ECO:0000314"/>
    <property type="project" value="ComplexPortal"/>
</dbReference>
<dbReference type="GO" id="GO:0061629">
    <property type="term" value="F:RNA polymerase II-specific DNA-binding transcription factor binding"/>
    <property type="evidence" value="ECO:0000314"/>
    <property type="project" value="SGD"/>
</dbReference>
<dbReference type="GO" id="GO:0034605">
    <property type="term" value="P:cellular response to heat"/>
    <property type="evidence" value="ECO:0000315"/>
    <property type="project" value="SGD"/>
</dbReference>
<dbReference type="GO" id="GO:0000122">
    <property type="term" value="P:negative regulation of transcription by RNA polymerase II"/>
    <property type="evidence" value="ECO:0000315"/>
    <property type="project" value="SGD"/>
</dbReference>
<dbReference type="GO" id="GO:0045893">
    <property type="term" value="P:positive regulation of DNA-templated transcription"/>
    <property type="evidence" value="ECO:0000318"/>
    <property type="project" value="GO_Central"/>
</dbReference>
<dbReference type="GO" id="GO:0045944">
    <property type="term" value="P:positive regulation of transcription by RNA polymerase II"/>
    <property type="evidence" value="ECO:0000315"/>
    <property type="project" value="SGD"/>
</dbReference>
<dbReference type="GO" id="GO:0032968">
    <property type="term" value="P:positive regulation of transcription elongation by RNA polymerase II"/>
    <property type="evidence" value="ECO:0000314"/>
    <property type="project" value="ComplexPortal"/>
</dbReference>
<dbReference type="GO" id="GO:0060261">
    <property type="term" value="P:positive regulation of transcription initiation by RNA polymerase II"/>
    <property type="evidence" value="ECO:0000314"/>
    <property type="project" value="ComplexPortal"/>
</dbReference>
<dbReference type="GO" id="GO:0070202">
    <property type="term" value="P:regulation of establishment of protein localization to chromosome"/>
    <property type="evidence" value="ECO:0000315"/>
    <property type="project" value="SGD"/>
</dbReference>
<dbReference type="GO" id="GO:0051123">
    <property type="term" value="P:RNA polymerase II preinitiation complex assembly"/>
    <property type="evidence" value="ECO:0000314"/>
    <property type="project" value="ComplexPortal"/>
</dbReference>
<dbReference type="InterPro" id="IPR048338">
    <property type="entry name" value="Mediator_Med16"/>
</dbReference>
<dbReference type="InterPro" id="IPR048339">
    <property type="entry name" value="Mediator_Med16_C"/>
</dbReference>
<dbReference type="InterPro" id="IPR021665">
    <property type="entry name" value="Mediator_Med16_N"/>
</dbReference>
<dbReference type="PANTHER" id="PTHR13224:SF6">
    <property type="entry name" value="MEDIATOR OF RNA POLYMERASE II TRANSCRIPTION SUBUNIT 16"/>
    <property type="match status" value="1"/>
</dbReference>
<dbReference type="PANTHER" id="PTHR13224">
    <property type="entry name" value="THYROID HORMONE RECEPTOR-ASSOCIATED PROTEIN-RELATED"/>
    <property type="match status" value="1"/>
</dbReference>
<dbReference type="Pfam" id="PF20719">
    <property type="entry name" value="Med16_C"/>
    <property type="match status" value="1"/>
</dbReference>
<dbReference type="Pfam" id="PF11635">
    <property type="entry name" value="Med16_N"/>
    <property type="match status" value="1"/>
</dbReference>
<proteinExistence type="evidence at protein level"/>
<name>MED16_YEAST</name>
<gene>
    <name type="primary">SIN4</name>
    <name type="synonym">BEL2</name>
    <name type="synonym">GAL22</name>
    <name type="synonym">MED16</name>
    <name type="synonym">RYE1</name>
    <name type="synonym">SDI3</name>
    <name type="synonym">SSF5</name>
    <name type="synonym">SSN4</name>
    <name type="synonym">TSF3</name>
    <name type="ordered locus">YNL236W</name>
    <name type="ORF">N1135</name>
</gene>
<comment type="function">
    <text evidence="7 8 9">Component of the Mediator complex, a coactivator involved in the regulated transcription of nearly all RNA polymerase II-dependent genes. Mediator functions as a bridge to convey information from gene-specific regulatory proteins to the basal RNA polymerase II transcription machinery. The Mediator complex, having a compact conformation in its free form, is recruited to promoters by direct interactions with regulatory proteins and serves for the assembly of a functional preinitiation complex with RNA polymerase II and the general transcription factors. The Mediator complex unfolds to an extended conformation and partially surrounds RNA polymerase II, specifically interacting with the unphosphorylated form of the C-terminal domain (CTD) of RNA polymerase II. The Mediator complex dissociates from the RNA polymerase II holoenzyme and stays at the promoter when transcriptional elongation begins.</text>
</comment>
<comment type="subunit">
    <text evidence="3 10">Component of the Mediator complex, which is composed of at least 21 subunits that form three structurally distinct submodules. The Mediator head module contains MED6, MED8, MED11, SRB4/MED17, SRB5/MED18, ROX3/MED19, SRB2/MED20 and SRB6/MED22, the middle module contains MED1, MED4, NUT1/MED5, MED7, CSE2/MED9, NUT2/MED10, SRB7/MED21 and SOH1/MED31, and the tail module contains MED2, PGD1/MED3, RGR1/MED14, GAL11/MED15 and SIN4/MED16. The head and the middle modules interact directly with RNA polymerase II, whereas the elongated tail module interacts with gene-specific regulatory proteins. Interacts with HOG1.</text>
</comment>
<comment type="interaction">
    <interactant intactId="EBI-17172">
        <id>P32259</id>
    </interactant>
    <interactant intactId="EBI-12407">
        <id>P53114</id>
        <label>NUT1</label>
    </interactant>
    <organismsDiffer>false</organismsDiffer>
    <experiments>5</experiments>
</comment>
<comment type="subcellular location">
    <subcellularLocation>
        <location evidence="4">Nucleus</location>
    </subcellularLocation>
</comment>
<comment type="PTM">
    <text evidence="6">Phosphorylated by KIN28.</text>
</comment>
<comment type="miscellaneous">
    <text evidence="5">Present with 1720 molecules/cell in log phase SD medium.</text>
</comment>
<comment type="similarity">
    <text evidence="11">Belongs to the Mediator complex subunit 16 family.</text>
</comment>
<protein>
    <recommendedName>
        <fullName>Mediator of RNA polymerase II transcription subunit 16</fullName>
    </recommendedName>
    <alternativeName>
        <fullName>Global transcriptional regulator SIN4</fullName>
    </alternativeName>
    <alternativeName>
        <fullName>Mediator complex subunit 16</fullName>
    </alternativeName>
    <alternativeName>
        <fullName>SNF1 suppressor protein 4</fullName>
    </alternativeName>
    <alternativeName>
        <fullName>SWI4 suppressor protein 5</fullName>
    </alternativeName>
    <alternativeName>
        <fullName>Transcriptional silencing factor 3</fullName>
    </alternativeName>
    <alternativeName>
        <fullName>YGP1 expression regulatory protein 1</fullName>
    </alternativeName>
</protein>
<keyword id="KW-0002">3D-structure</keyword>
<keyword id="KW-0010">Activator</keyword>
<keyword id="KW-0539">Nucleus</keyword>
<keyword id="KW-0597">Phosphoprotein</keyword>
<keyword id="KW-1185">Reference proteome</keyword>
<keyword id="KW-0804">Transcription</keyword>
<keyword id="KW-0805">Transcription regulation</keyword>
<sequence length="974" mass="111297">MMLGEHLMSWSKTGIIAYSDSQSSNANICLTFLESINGINWRFHTPQKYVLHPQLHEVQYQESSSTLSTHSTTTSVNGSTTAGVGSTPNFGGNSNKSPPQFFYNISSIHWNNWFSLPGDMLAVCDELGNMTMLITGQRPDRATTYEKLTMVFQDNVYKIYNHVMPLKPVDKLKPMNIERKQTRKEYNTSILEFRWLTSSKSVIVSQFCAFDSSSNTYRSRAQQVPPYGVYHPPFIKYACLAIRKNGQIDFWYQFSNSKDHKKITLQLLDTSNQRFKDLQWLEFARITPMNDDQCMLITTYSKLSKNISFYKLHVNWNLNATKPNVLNDPSLKIQFILSTTLDPTDDEGHVLKLENLHVVSKSSIEKDPSPEILVLYNVCDTSKSLVKRYRLAPTQLSAEYLVILKPDLNIDRNNSTNQIFQSRRYNLRRHSDIVLDKKVTLITSEMFDAFVSFYFEDGTIESYNQNDWKLETERLISQSQLGKFKNIIASPLSAGFNYGKLPLPPSVEWMKVSPSMCGVIVKQYNKKWPQFYAAVQKNYADPEKDSINATALAFGYVKSLHKQISAEDLTIAAKTHILRISFLDRKRAKEFITTLLKSLYSFFNISPDAPKEIMDKIITSRPLQKIMLLQLELGSCFSQENIEEMARVILYLKNVLFAFNGVARNFHFAIEQISNNSNQQQNPKLFQTIFSKQDLIHSLIPVAKWFVKFITYLTQEILILINDPTNKEYTLVHGIFGAKMSRTLILSILNEIKKVTQIVAKFPETSYPILNESSTFLKLVLSESPVDFEKFETFLVDVNNKFIALCEQQPSQEREFSLLVKAEIPPEYAKVGDFLLQYANNAVISHANAAAVYFADTSGLKISNSEFFNPEIFHLLQPLEEGLIIDTDKLPIKNRTSKSFSKLLYDDVTCDKLSVSEISDGKLKRCSRCGSVTRAGNIISSDKTIVPTSIQTKRWPTMYTRLCICSGMLFEMDG</sequence>